<accession>Q1CEK6</accession>
<accession>C4GXV4</accession>
<gene>
    <name evidence="1" type="primary">rlmE</name>
    <name evidence="1" type="synonym">ftsJ</name>
    <name evidence="1" type="synonym">rrmJ</name>
    <name type="ordered locus">YPN_3247</name>
    <name type="ORF">YP516_3689</name>
</gene>
<proteinExistence type="inferred from homology"/>
<evidence type="ECO:0000255" key="1">
    <source>
        <dbReference type="HAMAP-Rule" id="MF_01547"/>
    </source>
</evidence>
<reference key="1">
    <citation type="journal article" date="2006" name="J. Bacteriol.">
        <title>Complete genome sequence of Yersinia pestis strains Antiqua and Nepal516: evidence of gene reduction in an emerging pathogen.</title>
        <authorList>
            <person name="Chain P.S.G."/>
            <person name="Hu P."/>
            <person name="Malfatti S.A."/>
            <person name="Radnedge L."/>
            <person name="Larimer F."/>
            <person name="Vergez L.M."/>
            <person name="Worsham P."/>
            <person name="Chu M.C."/>
            <person name="Andersen G.L."/>
        </authorList>
    </citation>
    <scope>NUCLEOTIDE SEQUENCE [LARGE SCALE GENOMIC DNA]</scope>
    <source>
        <strain>Nepal516</strain>
    </source>
</reference>
<reference key="2">
    <citation type="submission" date="2009-04" db="EMBL/GenBank/DDBJ databases">
        <title>Yersinia pestis Nepal516A whole genome shotgun sequencing project.</title>
        <authorList>
            <person name="Plunkett G. III"/>
            <person name="Anderson B.D."/>
            <person name="Baumler D.J."/>
            <person name="Burland V."/>
            <person name="Cabot E.L."/>
            <person name="Glasner J.D."/>
            <person name="Mau B."/>
            <person name="Neeno-Eckwall E."/>
            <person name="Perna N.T."/>
            <person name="Munk A.C."/>
            <person name="Tapia R."/>
            <person name="Green L.D."/>
            <person name="Rogers Y.C."/>
            <person name="Detter J.C."/>
            <person name="Bruce D.C."/>
            <person name="Brettin T.S."/>
        </authorList>
    </citation>
    <scope>NUCLEOTIDE SEQUENCE [LARGE SCALE GENOMIC DNA]</scope>
    <source>
        <strain>Nepal516</strain>
    </source>
</reference>
<dbReference type="EC" id="2.1.1.166" evidence="1"/>
<dbReference type="EMBL" id="CP000305">
    <property type="protein sequence ID" value="ABG19574.1"/>
    <property type="molecule type" value="Genomic_DNA"/>
</dbReference>
<dbReference type="EMBL" id="ACNQ01000017">
    <property type="protein sequence ID" value="EEO75754.1"/>
    <property type="molecule type" value="Genomic_DNA"/>
</dbReference>
<dbReference type="RefSeq" id="WP_002228196.1">
    <property type="nucleotide sequence ID" value="NZ_ACNQ01000017.1"/>
</dbReference>
<dbReference type="SMR" id="Q1CEK6"/>
<dbReference type="GeneID" id="57975211"/>
<dbReference type="KEGG" id="ypn:YPN_3247"/>
<dbReference type="HOGENOM" id="CLU_009422_4_0_6"/>
<dbReference type="Proteomes" id="UP000008936">
    <property type="component" value="Chromosome"/>
</dbReference>
<dbReference type="GO" id="GO:0005737">
    <property type="term" value="C:cytoplasm"/>
    <property type="evidence" value="ECO:0007669"/>
    <property type="project" value="UniProtKB-SubCell"/>
</dbReference>
<dbReference type="GO" id="GO:0008650">
    <property type="term" value="F:rRNA (uridine-2'-O-)-methyltransferase activity"/>
    <property type="evidence" value="ECO:0007669"/>
    <property type="project" value="UniProtKB-UniRule"/>
</dbReference>
<dbReference type="FunFam" id="3.40.50.150:FF:000005">
    <property type="entry name" value="Ribosomal RNA large subunit methyltransferase E"/>
    <property type="match status" value="1"/>
</dbReference>
<dbReference type="Gene3D" id="3.40.50.150">
    <property type="entry name" value="Vaccinia Virus protein VP39"/>
    <property type="match status" value="1"/>
</dbReference>
<dbReference type="HAMAP" id="MF_01547">
    <property type="entry name" value="RNA_methyltr_E"/>
    <property type="match status" value="1"/>
</dbReference>
<dbReference type="InterPro" id="IPR050082">
    <property type="entry name" value="RNA_methyltr_RlmE"/>
</dbReference>
<dbReference type="InterPro" id="IPR002877">
    <property type="entry name" value="RNA_MeTrfase_FtsJ_dom"/>
</dbReference>
<dbReference type="InterPro" id="IPR015507">
    <property type="entry name" value="rRNA-MeTfrase_E"/>
</dbReference>
<dbReference type="InterPro" id="IPR004512">
    <property type="entry name" value="rRNA_MeTrfase_gammaproteobac"/>
</dbReference>
<dbReference type="InterPro" id="IPR029063">
    <property type="entry name" value="SAM-dependent_MTases_sf"/>
</dbReference>
<dbReference type="NCBIfam" id="NF008390">
    <property type="entry name" value="PRK11188.1"/>
    <property type="match status" value="1"/>
</dbReference>
<dbReference type="NCBIfam" id="TIGR00438">
    <property type="entry name" value="rrmJ"/>
    <property type="match status" value="1"/>
</dbReference>
<dbReference type="PANTHER" id="PTHR10920">
    <property type="entry name" value="RIBOSOMAL RNA METHYLTRANSFERASE"/>
    <property type="match status" value="1"/>
</dbReference>
<dbReference type="PANTHER" id="PTHR10920:SF18">
    <property type="entry name" value="RRNA METHYLTRANSFERASE 2, MITOCHONDRIAL"/>
    <property type="match status" value="1"/>
</dbReference>
<dbReference type="Pfam" id="PF01728">
    <property type="entry name" value="FtsJ"/>
    <property type="match status" value="1"/>
</dbReference>
<dbReference type="PIRSF" id="PIRSF005461">
    <property type="entry name" value="23S_rRNA_mtase"/>
    <property type="match status" value="1"/>
</dbReference>
<dbReference type="SUPFAM" id="SSF53335">
    <property type="entry name" value="S-adenosyl-L-methionine-dependent methyltransferases"/>
    <property type="match status" value="1"/>
</dbReference>
<protein>
    <recommendedName>
        <fullName evidence="1">Ribosomal RNA large subunit methyltransferase E</fullName>
        <ecNumber evidence="1">2.1.1.166</ecNumber>
    </recommendedName>
    <alternativeName>
        <fullName evidence="1">23S rRNA Um2552 methyltransferase</fullName>
    </alternativeName>
    <alternativeName>
        <fullName evidence="1">rRNA (uridine-2'-O-)-methyltransferase</fullName>
    </alternativeName>
</protein>
<organism>
    <name type="scientific">Yersinia pestis bv. Antiqua (strain Nepal516)</name>
    <dbReference type="NCBI Taxonomy" id="377628"/>
    <lineage>
        <taxon>Bacteria</taxon>
        <taxon>Pseudomonadati</taxon>
        <taxon>Pseudomonadota</taxon>
        <taxon>Gammaproteobacteria</taxon>
        <taxon>Enterobacterales</taxon>
        <taxon>Yersiniaceae</taxon>
        <taxon>Yersinia</taxon>
    </lineage>
</organism>
<sequence length="209" mass="23409">MSNKKRSASSSRWLQEHFSDKYVIQAQKKGLRSRAWFKLDEIQQSDKLFKQGMTVVDLGAAPGGWSQYAVTQIGSKGRVIACDLLPMDPIVGVDFLQGDFRDELVLKALLERVGDKKVQVVMCDMAPNMSGTPAVDIPKSMYLVELALDMCRDVLAPGGSFLVKVFQGDGFDEYLREIRSLFTKVKIRKPDASRARSREVYIVATGRKL</sequence>
<name>RLME_YERPN</name>
<keyword id="KW-0963">Cytoplasm</keyword>
<keyword id="KW-0489">Methyltransferase</keyword>
<keyword id="KW-0698">rRNA processing</keyword>
<keyword id="KW-0949">S-adenosyl-L-methionine</keyword>
<keyword id="KW-0808">Transferase</keyword>
<comment type="function">
    <text evidence="1">Specifically methylates the uridine in position 2552 of 23S rRNA at the 2'-O position of the ribose in the fully assembled 50S ribosomal subunit.</text>
</comment>
<comment type="catalytic activity">
    <reaction evidence="1">
        <text>uridine(2552) in 23S rRNA + S-adenosyl-L-methionine = 2'-O-methyluridine(2552) in 23S rRNA + S-adenosyl-L-homocysteine + H(+)</text>
        <dbReference type="Rhea" id="RHEA:42720"/>
        <dbReference type="Rhea" id="RHEA-COMP:10202"/>
        <dbReference type="Rhea" id="RHEA-COMP:10203"/>
        <dbReference type="ChEBI" id="CHEBI:15378"/>
        <dbReference type="ChEBI" id="CHEBI:57856"/>
        <dbReference type="ChEBI" id="CHEBI:59789"/>
        <dbReference type="ChEBI" id="CHEBI:65315"/>
        <dbReference type="ChEBI" id="CHEBI:74478"/>
        <dbReference type="EC" id="2.1.1.166"/>
    </reaction>
</comment>
<comment type="subcellular location">
    <subcellularLocation>
        <location evidence="1">Cytoplasm</location>
    </subcellularLocation>
</comment>
<comment type="similarity">
    <text evidence="1">Belongs to the class I-like SAM-binding methyltransferase superfamily. RNA methyltransferase RlmE family.</text>
</comment>
<feature type="chain" id="PRO_0000282816" description="Ribosomal RNA large subunit methyltransferase E">
    <location>
        <begin position="1"/>
        <end position="209"/>
    </location>
</feature>
<feature type="active site" description="Proton acceptor" evidence="1">
    <location>
        <position position="164"/>
    </location>
</feature>
<feature type="binding site" evidence="1">
    <location>
        <position position="63"/>
    </location>
    <ligand>
        <name>S-adenosyl-L-methionine</name>
        <dbReference type="ChEBI" id="CHEBI:59789"/>
    </ligand>
</feature>
<feature type="binding site" evidence="1">
    <location>
        <position position="65"/>
    </location>
    <ligand>
        <name>S-adenosyl-L-methionine</name>
        <dbReference type="ChEBI" id="CHEBI:59789"/>
    </ligand>
</feature>
<feature type="binding site" evidence="1">
    <location>
        <position position="83"/>
    </location>
    <ligand>
        <name>S-adenosyl-L-methionine</name>
        <dbReference type="ChEBI" id="CHEBI:59789"/>
    </ligand>
</feature>
<feature type="binding site" evidence="1">
    <location>
        <position position="99"/>
    </location>
    <ligand>
        <name>S-adenosyl-L-methionine</name>
        <dbReference type="ChEBI" id="CHEBI:59789"/>
    </ligand>
</feature>
<feature type="binding site" evidence="1">
    <location>
        <position position="124"/>
    </location>
    <ligand>
        <name>S-adenosyl-L-methionine</name>
        <dbReference type="ChEBI" id="CHEBI:59789"/>
    </ligand>
</feature>